<accession>Q5E8P0</accession>
<reference key="1">
    <citation type="journal article" date="2005" name="Proc. Natl. Acad. Sci. U.S.A.">
        <title>Complete genome sequence of Vibrio fischeri: a symbiotic bacterium with pathogenic congeners.</title>
        <authorList>
            <person name="Ruby E.G."/>
            <person name="Urbanowski M."/>
            <person name="Campbell J."/>
            <person name="Dunn A."/>
            <person name="Faini M."/>
            <person name="Gunsalus R."/>
            <person name="Lostroh P."/>
            <person name="Lupp C."/>
            <person name="McCann J."/>
            <person name="Millikan D."/>
            <person name="Schaefer A."/>
            <person name="Stabb E."/>
            <person name="Stevens A."/>
            <person name="Visick K."/>
            <person name="Whistler C."/>
            <person name="Greenberg E.P."/>
        </authorList>
    </citation>
    <scope>NUCLEOTIDE SEQUENCE [LARGE SCALE GENOMIC DNA]</scope>
    <source>
        <strain>ATCC 700601 / ES114</strain>
    </source>
</reference>
<organism>
    <name type="scientific">Aliivibrio fischeri (strain ATCC 700601 / ES114)</name>
    <name type="common">Vibrio fischeri</name>
    <dbReference type="NCBI Taxonomy" id="312309"/>
    <lineage>
        <taxon>Bacteria</taxon>
        <taxon>Pseudomonadati</taxon>
        <taxon>Pseudomonadota</taxon>
        <taxon>Gammaproteobacteria</taxon>
        <taxon>Vibrionales</taxon>
        <taxon>Vibrionaceae</taxon>
        <taxon>Aliivibrio</taxon>
    </lineage>
</organism>
<gene>
    <name evidence="1" type="primary">rph</name>
    <name type="ordered locus">VF_0111</name>
</gene>
<keyword id="KW-0548">Nucleotidyltransferase</keyword>
<keyword id="KW-1185">Reference proteome</keyword>
<keyword id="KW-0694">RNA-binding</keyword>
<keyword id="KW-0698">rRNA processing</keyword>
<keyword id="KW-0808">Transferase</keyword>
<keyword id="KW-0819">tRNA processing</keyword>
<keyword id="KW-0820">tRNA-binding</keyword>
<proteinExistence type="inferred from homology"/>
<comment type="function">
    <text evidence="1">Phosphorolytic 3'-5' exoribonuclease that plays an important role in tRNA 3'-end maturation. Removes nucleotide residues following the 3'-CCA terminus of tRNAs; can also add nucleotides to the ends of RNA molecules by using nucleoside diphosphates as substrates, but this may not be physiologically important. Probably plays a role in initiation of 16S rRNA degradation (leading to ribosome degradation) during starvation.</text>
</comment>
<comment type="catalytic activity">
    <reaction evidence="1">
        <text>tRNA(n+1) + phosphate = tRNA(n) + a ribonucleoside 5'-diphosphate</text>
        <dbReference type="Rhea" id="RHEA:10628"/>
        <dbReference type="Rhea" id="RHEA-COMP:17343"/>
        <dbReference type="Rhea" id="RHEA-COMP:17344"/>
        <dbReference type="ChEBI" id="CHEBI:43474"/>
        <dbReference type="ChEBI" id="CHEBI:57930"/>
        <dbReference type="ChEBI" id="CHEBI:173114"/>
        <dbReference type="EC" id="2.7.7.56"/>
    </reaction>
</comment>
<comment type="subunit">
    <text evidence="1">Homohexameric ring arranged as a trimer of dimers.</text>
</comment>
<comment type="similarity">
    <text evidence="1">Belongs to the RNase PH family.</text>
</comment>
<name>RNPH_ALIF1</name>
<dbReference type="EC" id="2.7.7.56" evidence="1"/>
<dbReference type="EMBL" id="CP000020">
    <property type="protein sequence ID" value="AAW84606.1"/>
    <property type="molecule type" value="Genomic_DNA"/>
</dbReference>
<dbReference type="RefSeq" id="WP_011260978.1">
    <property type="nucleotide sequence ID" value="NC_006840.2"/>
</dbReference>
<dbReference type="RefSeq" id="YP_203494.1">
    <property type="nucleotide sequence ID" value="NC_006840.2"/>
</dbReference>
<dbReference type="SMR" id="Q5E8P0"/>
<dbReference type="STRING" id="312309.VF_0111"/>
<dbReference type="EnsemblBacteria" id="AAW84606">
    <property type="protein sequence ID" value="AAW84606"/>
    <property type="gene ID" value="VF_0111"/>
</dbReference>
<dbReference type="GeneID" id="54162738"/>
<dbReference type="KEGG" id="vfi:VF_0111"/>
<dbReference type="PATRIC" id="fig|312309.11.peg.110"/>
<dbReference type="eggNOG" id="COG0689">
    <property type="taxonomic scope" value="Bacteria"/>
</dbReference>
<dbReference type="HOGENOM" id="CLU_050858_0_0_6"/>
<dbReference type="OrthoDB" id="9802265at2"/>
<dbReference type="Proteomes" id="UP000000537">
    <property type="component" value="Chromosome I"/>
</dbReference>
<dbReference type="GO" id="GO:0000175">
    <property type="term" value="F:3'-5'-RNA exonuclease activity"/>
    <property type="evidence" value="ECO:0007669"/>
    <property type="project" value="UniProtKB-UniRule"/>
</dbReference>
<dbReference type="GO" id="GO:0000049">
    <property type="term" value="F:tRNA binding"/>
    <property type="evidence" value="ECO:0007669"/>
    <property type="project" value="UniProtKB-UniRule"/>
</dbReference>
<dbReference type="GO" id="GO:0009022">
    <property type="term" value="F:tRNA nucleotidyltransferase activity"/>
    <property type="evidence" value="ECO:0007669"/>
    <property type="project" value="UniProtKB-UniRule"/>
</dbReference>
<dbReference type="GO" id="GO:0016075">
    <property type="term" value="P:rRNA catabolic process"/>
    <property type="evidence" value="ECO:0007669"/>
    <property type="project" value="UniProtKB-UniRule"/>
</dbReference>
<dbReference type="GO" id="GO:0006364">
    <property type="term" value="P:rRNA processing"/>
    <property type="evidence" value="ECO:0007669"/>
    <property type="project" value="UniProtKB-KW"/>
</dbReference>
<dbReference type="GO" id="GO:0008033">
    <property type="term" value="P:tRNA processing"/>
    <property type="evidence" value="ECO:0007669"/>
    <property type="project" value="UniProtKB-UniRule"/>
</dbReference>
<dbReference type="CDD" id="cd11362">
    <property type="entry name" value="RNase_PH_bact"/>
    <property type="match status" value="1"/>
</dbReference>
<dbReference type="FunFam" id="3.30.230.70:FF:000003">
    <property type="entry name" value="Ribonuclease PH"/>
    <property type="match status" value="1"/>
</dbReference>
<dbReference type="Gene3D" id="3.30.230.70">
    <property type="entry name" value="GHMP Kinase, N-terminal domain"/>
    <property type="match status" value="1"/>
</dbReference>
<dbReference type="HAMAP" id="MF_00564">
    <property type="entry name" value="RNase_PH"/>
    <property type="match status" value="1"/>
</dbReference>
<dbReference type="InterPro" id="IPR001247">
    <property type="entry name" value="ExoRNase_PH_dom1"/>
</dbReference>
<dbReference type="InterPro" id="IPR015847">
    <property type="entry name" value="ExoRNase_PH_dom2"/>
</dbReference>
<dbReference type="InterPro" id="IPR036345">
    <property type="entry name" value="ExoRNase_PH_dom2_sf"/>
</dbReference>
<dbReference type="InterPro" id="IPR027408">
    <property type="entry name" value="PNPase/RNase_PH_dom_sf"/>
</dbReference>
<dbReference type="InterPro" id="IPR020568">
    <property type="entry name" value="Ribosomal_Su5_D2-typ_SF"/>
</dbReference>
<dbReference type="InterPro" id="IPR050080">
    <property type="entry name" value="RNase_PH"/>
</dbReference>
<dbReference type="InterPro" id="IPR002381">
    <property type="entry name" value="RNase_PH_bac-type"/>
</dbReference>
<dbReference type="InterPro" id="IPR018336">
    <property type="entry name" value="RNase_PH_CS"/>
</dbReference>
<dbReference type="NCBIfam" id="TIGR01966">
    <property type="entry name" value="RNasePH"/>
    <property type="match status" value="1"/>
</dbReference>
<dbReference type="PANTHER" id="PTHR11953">
    <property type="entry name" value="EXOSOME COMPLEX COMPONENT"/>
    <property type="match status" value="1"/>
</dbReference>
<dbReference type="PANTHER" id="PTHR11953:SF0">
    <property type="entry name" value="EXOSOME COMPLEX COMPONENT RRP41"/>
    <property type="match status" value="1"/>
</dbReference>
<dbReference type="Pfam" id="PF01138">
    <property type="entry name" value="RNase_PH"/>
    <property type="match status" value="1"/>
</dbReference>
<dbReference type="Pfam" id="PF03725">
    <property type="entry name" value="RNase_PH_C"/>
    <property type="match status" value="1"/>
</dbReference>
<dbReference type="SUPFAM" id="SSF55666">
    <property type="entry name" value="Ribonuclease PH domain 2-like"/>
    <property type="match status" value="1"/>
</dbReference>
<dbReference type="SUPFAM" id="SSF54211">
    <property type="entry name" value="Ribosomal protein S5 domain 2-like"/>
    <property type="match status" value="1"/>
</dbReference>
<dbReference type="PROSITE" id="PS01277">
    <property type="entry name" value="RIBONUCLEASE_PH"/>
    <property type="match status" value="1"/>
</dbReference>
<protein>
    <recommendedName>
        <fullName evidence="1">Ribonuclease PH</fullName>
        <shortName evidence="1">RNase PH</shortName>
        <ecNumber evidence="1">2.7.7.56</ecNumber>
    </recommendedName>
    <alternativeName>
        <fullName evidence="1">tRNA nucleotidyltransferase</fullName>
    </alternativeName>
</protein>
<sequence>MRPSGRTAQQVRPITLTRNFTAHAEGSVLVEFGNTKVICTASVEENVPRWLKGKGKGWVTAEYGMLPRATHTRNRREAASGKQGGRTMEIQRLIARSLRAAVDLEALGEQMITVDCDVIQADGGTRTASITGASVALADAINHMIATGKLKSNPMKGHVAAVSVGIYNGEAICDLEYVEDSAADTDMNVVMMEDGKMIEVQGTAEEAPFSHQELLDMLALAQQGINDIIEKQKAALAE</sequence>
<evidence type="ECO:0000255" key="1">
    <source>
        <dbReference type="HAMAP-Rule" id="MF_00564"/>
    </source>
</evidence>
<feature type="chain" id="PRO_1000024903" description="Ribonuclease PH">
    <location>
        <begin position="1"/>
        <end position="238"/>
    </location>
</feature>
<feature type="binding site" evidence="1">
    <location>
        <position position="86"/>
    </location>
    <ligand>
        <name>phosphate</name>
        <dbReference type="ChEBI" id="CHEBI:43474"/>
        <note>substrate</note>
    </ligand>
</feature>
<feature type="binding site" evidence="1">
    <location>
        <begin position="124"/>
        <end position="126"/>
    </location>
    <ligand>
        <name>phosphate</name>
        <dbReference type="ChEBI" id="CHEBI:43474"/>
        <note>substrate</note>
    </ligand>
</feature>